<accession>A6L903</accession>
<comment type="function">
    <text evidence="1">Catalyzes the reversible oxidation of malate to oxaloacetate.</text>
</comment>
<comment type="catalytic activity">
    <reaction evidence="1">
        <text>(S)-malate + NAD(+) = oxaloacetate + NADH + H(+)</text>
        <dbReference type="Rhea" id="RHEA:21432"/>
        <dbReference type="ChEBI" id="CHEBI:15378"/>
        <dbReference type="ChEBI" id="CHEBI:15589"/>
        <dbReference type="ChEBI" id="CHEBI:16452"/>
        <dbReference type="ChEBI" id="CHEBI:57540"/>
        <dbReference type="ChEBI" id="CHEBI:57945"/>
        <dbReference type="EC" id="1.1.1.37"/>
    </reaction>
</comment>
<comment type="similarity">
    <text evidence="1">Belongs to the LDH/MDH superfamily. MDH type 3 family.</text>
</comment>
<evidence type="ECO:0000255" key="1">
    <source>
        <dbReference type="HAMAP-Rule" id="MF_00487"/>
    </source>
</evidence>
<keyword id="KW-0520">NAD</keyword>
<keyword id="KW-0560">Oxidoreductase</keyword>
<keyword id="KW-1185">Reference proteome</keyword>
<keyword id="KW-0816">Tricarboxylic acid cycle</keyword>
<sequence length="313" mass="32848">MSKVTVVGAGNVGATCANVLAFNEVADEVVMLDVKEGVSEGKAMDMMQTAQLLGFDTKVVGCTNDYEKTANSDVVVITSGIPRKPGMTREELIGVNAGIVKSVAQNILKYSPNAILVVISNPMDTMTYLSLKSLGLPKNRIIGMGGALDSSRFKYFLSQALGCNANEVEGMVIGGHGDTTMIPLARLATYKGIPVSKLLSAEKLQEVVASTMVGGATLTKLLGTSAWYAPGAAGAFVVESIIHNQGKMVPCSVYLEGEYGESDLCIGVPVILGKNGIEKIVELELTAEEKELFAKSAAAVHKTNEALKEVGAL</sequence>
<proteinExistence type="inferred from homology"/>
<name>MDH_PARD8</name>
<gene>
    <name evidence="1" type="primary">mdh</name>
    <name type="ordered locus">BDI_0389</name>
</gene>
<dbReference type="EC" id="1.1.1.37" evidence="1"/>
<dbReference type="EMBL" id="CP000140">
    <property type="protein sequence ID" value="ABR42167.1"/>
    <property type="molecule type" value="Genomic_DNA"/>
</dbReference>
<dbReference type="RefSeq" id="WP_005855409.1">
    <property type="nucleotide sequence ID" value="NZ_LR215978.1"/>
</dbReference>
<dbReference type="SMR" id="A6L903"/>
<dbReference type="STRING" id="435591.BDI_0389"/>
<dbReference type="PaxDb" id="435591-BDI_0389"/>
<dbReference type="GeneID" id="93524945"/>
<dbReference type="KEGG" id="pdi:BDI_0389"/>
<dbReference type="eggNOG" id="COG0039">
    <property type="taxonomic scope" value="Bacteria"/>
</dbReference>
<dbReference type="HOGENOM" id="CLU_045401_2_1_10"/>
<dbReference type="BioCyc" id="PDIS435591:G1G5A-400-MONOMER"/>
<dbReference type="Proteomes" id="UP000000566">
    <property type="component" value="Chromosome"/>
</dbReference>
<dbReference type="GO" id="GO:0004459">
    <property type="term" value="F:L-lactate dehydrogenase activity"/>
    <property type="evidence" value="ECO:0007669"/>
    <property type="project" value="TreeGrafter"/>
</dbReference>
<dbReference type="GO" id="GO:0030060">
    <property type="term" value="F:L-malate dehydrogenase (NAD+) activity"/>
    <property type="evidence" value="ECO:0007669"/>
    <property type="project" value="UniProtKB-UniRule"/>
</dbReference>
<dbReference type="GO" id="GO:0006089">
    <property type="term" value="P:lactate metabolic process"/>
    <property type="evidence" value="ECO:0007669"/>
    <property type="project" value="TreeGrafter"/>
</dbReference>
<dbReference type="GO" id="GO:0006099">
    <property type="term" value="P:tricarboxylic acid cycle"/>
    <property type="evidence" value="ECO:0007669"/>
    <property type="project" value="UniProtKB-UniRule"/>
</dbReference>
<dbReference type="CDD" id="cd01339">
    <property type="entry name" value="LDH-like_MDH"/>
    <property type="match status" value="1"/>
</dbReference>
<dbReference type="FunFam" id="3.40.50.720:FF:000018">
    <property type="entry name" value="Malate dehydrogenase"/>
    <property type="match status" value="1"/>
</dbReference>
<dbReference type="FunFam" id="3.90.110.10:FF:000004">
    <property type="entry name" value="Malate dehydrogenase"/>
    <property type="match status" value="1"/>
</dbReference>
<dbReference type="Gene3D" id="3.90.110.10">
    <property type="entry name" value="Lactate dehydrogenase/glycoside hydrolase, family 4, C-terminal"/>
    <property type="match status" value="1"/>
</dbReference>
<dbReference type="Gene3D" id="3.40.50.720">
    <property type="entry name" value="NAD(P)-binding Rossmann-like Domain"/>
    <property type="match status" value="1"/>
</dbReference>
<dbReference type="HAMAP" id="MF_00487">
    <property type="entry name" value="Malate_dehydrog_3"/>
    <property type="match status" value="1"/>
</dbReference>
<dbReference type="InterPro" id="IPR001557">
    <property type="entry name" value="L-lactate/malate_DH"/>
</dbReference>
<dbReference type="InterPro" id="IPR022383">
    <property type="entry name" value="Lactate/malate_DH_C"/>
</dbReference>
<dbReference type="InterPro" id="IPR001236">
    <property type="entry name" value="Lactate/malate_DH_N"/>
</dbReference>
<dbReference type="InterPro" id="IPR015955">
    <property type="entry name" value="Lactate_DH/Glyco_Ohase_4_C"/>
</dbReference>
<dbReference type="InterPro" id="IPR011275">
    <property type="entry name" value="Malate_DH_type3"/>
</dbReference>
<dbReference type="InterPro" id="IPR036291">
    <property type="entry name" value="NAD(P)-bd_dom_sf"/>
</dbReference>
<dbReference type="NCBIfam" id="TIGR01763">
    <property type="entry name" value="MalateDH_bact"/>
    <property type="match status" value="1"/>
</dbReference>
<dbReference type="NCBIfam" id="NF004863">
    <property type="entry name" value="PRK06223.1"/>
    <property type="match status" value="1"/>
</dbReference>
<dbReference type="PANTHER" id="PTHR43128">
    <property type="entry name" value="L-2-HYDROXYCARBOXYLATE DEHYDROGENASE (NAD(P)(+))"/>
    <property type="match status" value="1"/>
</dbReference>
<dbReference type="PANTHER" id="PTHR43128:SF16">
    <property type="entry name" value="L-LACTATE DEHYDROGENASE"/>
    <property type="match status" value="1"/>
</dbReference>
<dbReference type="Pfam" id="PF02866">
    <property type="entry name" value="Ldh_1_C"/>
    <property type="match status" value="1"/>
</dbReference>
<dbReference type="Pfam" id="PF00056">
    <property type="entry name" value="Ldh_1_N"/>
    <property type="match status" value="1"/>
</dbReference>
<dbReference type="PIRSF" id="PIRSF000102">
    <property type="entry name" value="Lac_mal_DH"/>
    <property type="match status" value="1"/>
</dbReference>
<dbReference type="PRINTS" id="PR00086">
    <property type="entry name" value="LLDHDRGNASE"/>
</dbReference>
<dbReference type="SUPFAM" id="SSF56327">
    <property type="entry name" value="LDH C-terminal domain-like"/>
    <property type="match status" value="1"/>
</dbReference>
<dbReference type="SUPFAM" id="SSF51735">
    <property type="entry name" value="NAD(P)-binding Rossmann-fold domains"/>
    <property type="match status" value="1"/>
</dbReference>
<protein>
    <recommendedName>
        <fullName evidence="1">Malate dehydrogenase</fullName>
        <ecNumber evidence="1">1.1.1.37</ecNumber>
    </recommendedName>
</protein>
<feature type="chain" id="PRO_1000026482" description="Malate dehydrogenase">
    <location>
        <begin position="1"/>
        <end position="313"/>
    </location>
</feature>
<feature type="active site" description="Proton acceptor" evidence="1">
    <location>
        <position position="176"/>
    </location>
</feature>
<feature type="binding site" evidence="1">
    <location>
        <begin position="8"/>
        <end position="13"/>
    </location>
    <ligand>
        <name>NAD(+)</name>
        <dbReference type="ChEBI" id="CHEBI:57540"/>
    </ligand>
</feature>
<feature type="binding site" evidence="1">
    <location>
        <position position="33"/>
    </location>
    <ligand>
        <name>NAD(+)</name>
        <dbReference type="ChEBI" id="CHEBI:57540"/>
    </ligand>
</feature>
<feature type="binding site" evidence="1">
    <location>
        <position position="83"/>
    </location>
    <ligand>
        <name>substrate</name>
    </ligand>
</feature>
<feature type="binding site" evidence="1">
    <location>
        <position position="89"/>
    </location>
    <ligand>
        <name>substrate</name>
    </ligand>
</feature>
<feature type="binding site" evidence="1">
    <location>
        <position position="96"/>
    </location>
    <ligand>
        <name>NAD(+)</name>
        <dbReference type="ChEBI" id="CHEBI:57540"/>
    </ligand>
</feature>
<feature type="binding site" evidence="1">
    <location>
        <begin position="119"/>
        <end position="121"/>
    </location>
    <ligand>
        <name>NAD(+)</name>
        <dbReference type="ChEBI" id="CHEBI:57540"/>
    </ligand>
</feature>
<feature type="binding site" evidence="1">
    <location>
        <position position="121"/>
    </location>
    <ligand>
        <name>substrate</name>
    </ligand>
</feature>
<feature type="binding site" evidence="1">
    <location>
        <position position="152"/>
    </location>
    <ligand>
        <name>substrate</name>
    </ligand>
</feature>
<reference key="1">
    <citation type="journal article" date="2007" name="PLoS Biol.">
        <title>Evolution of symbiotic bacteria in the distal human intestine.</title>
        <authorList>
            <person name="Xu J."/>
            <person name="Mahowald M.A."/>
            <person name="Ley R.E."/>
            <person name="Lozupone C.A."/>
            <person name="Hamady M."/>
            <person name="Martens E.C."/>
            <person name="Henrissat B."/>
            <person name="Coutinho P.M."/>
            <person name="Minx P."/>
            <person name="Latreille P."/>
            <person name="Cordum H."/>
            <person name="Van Brunt A."/>
            <person name="Kim K."/>
            <person name="Fulton R.S."/>
            <person name="Fulton L.A."/>
            <person name="Clifton S.W."/>
            <person name="Wilson R.K."/>
            <person name="Knight R.D."/>
            <person name="Gordon J.I."/>
        </authorList>
    </citation>
    <scope>NUCLEOTIDE SEQUENCE [LARGE SCALE GENOMIC DNA]</scope>
    <source>
        <strain>ATCC 8503 / DSM 20701 / CIP 104284 / JCM 5825 / NCTC 11152</strain>
    </source>
</reference>
<organism>
    <name type="scientific">Parabacteroides distasonis (strain ATCC 8503 / DSM 20701 / CIP 104284 / JCM 5825 / NCTC 11152)</name>
    <dbReference type="NCBI Taxonomy" id="435591"/>
    <lineage>
        <taxon>Bacteria</taxon>
        <taxon>Pseudomonadati</taxon>
        <taxon>Bacteroidota</taxon>
        <taxon>Bacteroidia</taxon>
        <taxon>Bacteroidales</taxon>
        <taxon>Tannerellaceae</taxon>
        <taxon>Parabacteroides</taxon>
    </lineage>
</organism>